<sequence>MQKSEGFRSKTRYKLQKHPRQKGMAPLTRALKCYTEGDRVHVVLDPSVQKGMPHPKFHGKTGVVVAQRGRSFLVRVKDGGKYKDIIARPQHLRESKL</sequence>
<evidence type="ECO:0000255" key="1">
    <source>
        <dbReference type="HAMAP-Rule" id="MF_00369"/>
    </source>
</evidence>
<evidence type="ECO:0000256" key="2">
    <source>
        <dbReference type="SAM" id="MobiDB-lite"/>
    </source>
</evidence>
<evidence type="ECO:0000305" key="3"/>
<protein>
    <recommendedName>
        <fullName evidence="1">Large ribosomal subunit protein eL21</fullName>
    </recommendedName>
    <alternativeName>
        <fullName evidence="3">50S ribosomal protein L21e</fullName>
    </alternativeName>
</protein>
<name>RL21_METM6</name>
<dbReference type="EMBL" id="CP000867">
    <property type="protein sequence ID" value="ABX01671.1"/>
    <property type="molecule type" value="Genomic_DNA"/>
</dbReference>
<dbReference type="SMR" id="A9A8J8"/>
<dbReference type="STRING" id="444158.MmarC6_0854"/>
<dbReference type="KEGG" id="mmx:MmarC6_0854"/>
<dbReference type="eggNOG" id="arCOG04129">
    <property type="taxonomic scope" value="Archaea"/>
</dbReference>
<dbReference type="HOGENOM" id="CLU_103610_1_1_2"/>
<dbReference type="OrthoDB" id="6295at2157"/>
<dbReference type="PhylomeDB" id="A9A8J8"/>
<dbReference type="GO" id="GO:1990904">
    <property type="term" value="C:ribonucleoprotein complex"/>
    <property type="evidence" value="ECO:0007669"/>
    <property type="project" value="UniProtKB-KW"/>
</dbReference>
<dbReference type="GO" id="GO:0005840">
    <property type="term" value="C:ribosome"/>
    <property type="evidence" value="ECO:0007669"/>
    <property type="project" value="UniProtKB-KW"/>
</dbReference>
<dbReference type="GO" id="GO:0003735">
    <property type="term" value="F:structural constituent of ribosome"/>
    <property type="evidence" value="ECO:0007669"/>
    <property type="project" value="InterPro"/>
</dbReference>
<dbReference type="GO" id="GO:0006412">
    <property type="term" value="P:translation"/>
    <property type="evidence" value="ECO:0007669"/>
    <property type="project" value="UniProtKB-UniRule"/>
</dbReference>
<dbReference type="FunFam" id="2.30.30.70:FF:000001">
    <property type="entry name" value="60S ribosomal protein L21"/>
    <property type="match status" value="1"/>
</dbReference>
<dbReference type="Gene3D" id="2.30.30.70">
    <property type="entry name" value="Ribosomal protein L21"/>
    <property type="match status" value="1"/>
</dbReference>
<dbReference type="HAMAP" id="MF_00369">
    <property type="entry name" value="Ribosomal_eL21"/>
    <property type="match status" value="1"/>
</dbReference>
<dbReference type="InterPro" id="IPR001147">
    <property type="entry name" value="Ribosomal_eL21"/>
</dbReference>
<dbReference type="InterPro" id="IPR022856">
    <property type="entry name" value="Ribosomal_eL21_arc"/>
</dbReference>
<dbReference type="InterPro" id="IPR018259">
    <property type="entry name" value="Ribosomal_eL21_CS"/>
</dbReference>
<dbReference type="InterPro" id="IPR036948">
    <property type="entry name" value="Ribosomal_eL21_sf"/>
</dbReference>
<dbReference type="InterPro" id="IPR008991">
    <property type="entry name" value="Translation_prot_SH3-like_sf"/>
</dbReference>
<dbReference type="NCBIfam" id="NF003303">
    <property type="entry name" value="PRK04306.1"/>
    <property type="match status" value="1"/>
</dbReference>
<dbReference type="PANTHER" id="PTHR20981">
    <property type="entry name" value="60S RIBOSOMAL PROTEIN L21"/>
    <property type="match status" value="1"/>
</dbReference>
<dbReference type="Pfam" id="PF01157">
    <property type="entry name" value="Ribosomal_L21e"/>
    <property type="match status" value="1"/>
</dbReference>
<dbReference type="SUPFAM" id="SSF50104">
    <property type="entry name" value="Translation proteins SH3-like domain"/>
    <property type="match status" value="1"/>
</dbReference>
<dbReference type="PROSITE" id="PS01171">
    <property type="entry name" value="RIBOSOMAL_L21E"/>
    <property type="match status" value="1"/>
</dbReference>
<reference key="1">
    <citation type="submission" date="2007-10" db="EMBL/GenBank/DDBJ databases">
        <title>Complete sequence of Methanococcus maripaludis C6.</title>
        <authorList>
            <consortium name="US DOE Joint Genome Institute"/>
            <person name="Copeland A."/>
            <person name="Lucas S."/>
            <person name="Lapidus A."/>
            <person name="Barry K."/>
            <person name="Glavina del Rio T."/>
            <person name="Dalin E."/>
            <person name="Tice H."/>
            <person name="Pitluck S."/>
            <person name="Clum A."/>
            <person name="Schmutz J."/>
            <person name="Larimer F."/>
            <person name="Land M."/>
            <person name="Hauser L."/>
            <person name="Kyrpides N."/>
            <person name="Mikhailova N."/>
            <person name="Sieprawska-Lupa M."/>
            <person name="Whitman W.B."/>
            <person name="Richardson P."/>
        </authorList>
    </citation>
    <scope>NUCLEOTIDE SEQUENCE [LARGE SCALE GENOMIC DNA]</scope>
    <source>
        <strain>C6 / ATCC BAA-1332</strain>
    </source>
</reference>
<keyword id="KW-0687">Ribonucleoprotein</keyword>
<keyword id="KW-0689">Ribosomal protein</keyword>
<organism>
    <name type="scientific">Methanococcus maripaludis (strain C6 / ATCC BAA-1332)</name>
    <dbReference type="NCBI Taxonomy" id="444158"/>
    <lineage>
        <taxon>Archaea</taxon>
        <taxon>Methanobacteriati</taxon>
        <taxon>Methanobacteriota</taxon>
        <taxon>Methanomada group</taxon>
        <taxon>Methanococci</taxon>
        <taxon>Methanococcales</taxon>
        <taxon>Methanococcaceae</taxon>
        <taxon>Methanococcus</taxon>
    </lineage>
</organism>
<accession>A9A8J8</accession>
<proteinExistence type="inferred from homology"/>
<comment type="similarity">
    <text evidence="1">Belongs to the eukaryotic ribosomal protein eL21 family.</text>
</comment>
<gene>
    <name evidence="1" type="primary">rpl21e</name>
    <name type="ordered locus">MmarC6_0854</name>
</gene>
<feature type="chain" id="PRO_1000121516" description="Large ribosomal subunit protein eL21">
    <location>
        <begin position="1"/>
        <end position="97"/>
    </location>
</feature>
<feature type="region of interest" description="Disordered" evidence="2">
    <location>
        <begin position="1"/>
        <end position="26"/>
    </location>
</feature>
<feature type="compositionally biased region" description="Basic residues" evidence="2">
    <location>
        <begin position="9"/>
        <end position="21"/>
    </location>
</feature>